<gene>
    <name evidence="1" type="primary">atpF</name>
    <name type="ordered locus">WIGBR0040</name>
</gene>
<feature type="chain" id="PRO_0000368862" description="ATP synthase subunit b">
    <location>
        <begin position="1"/>
        <end position="161"/>
    </location>
</feature>
<feature type="transmembrane region" description="Helical" evidence="1">
    <location>
        <begin position="12"/>
        <end position="32"/>
    </location>
</feature>
<accession>Q8D3J7</accession>
<keyword id="KW-0066">ATP synthesis</keyword>
<keyword id="KW-1003">Cell membrane</keyword>
<keyword id="KW-0138">CF(0)</keyword>
<keyword id="KW-0375">Hydrogen ion transport</keyword>
<keyword id="KW-0406">Ion transport</keyword>
<keyword id="KW-0472">Membrane</keyword>
<keyword id="KW-1185">Reference proteome</keyword>
<keyword id="KW-0812">Transmembrane</keyword>
<keyword id="KW-1133">Transmembrane helix</keyword>
<keyword id="KW-0813">Transport</keyword>
<name>ATPF_WIGBR</name>
<comment type="function">
    <text evidence="1">F(1)F(0) ATP synthase produces ATP from ADP in the presence of a proton or sodium gradient. F-type ATPases consist of two structural domains, F(1) containing the extramembraneous catalytic core and F(0) containing the membrane proton channel, linked together by a central stalk and a peripheral stalk. During catalysis, ATP synthesis in the catalytic domain of F(1) is coupled via a rotary mechanism of the central stalk subunits to proton translocation.</text>
</comment>
<comment type="function">
    <text evidence="1">Component of the F(0) channel, it forms part of the peripheral stalk, linking F(1) to F(0).</text>
</comment>
<comment type="subunit">
    <text evidence="1">F-type ATPases have 2 components, F(1) - the catalytic core - and F(0) - the membrane proton channel. F(1) has five subunits: alpha(3), beta(3), gamma(1), delta(1), epsilon(1). F(0) has three main subunits: a(1), b(2) and c(10-14). The alpha and beta chains form an alternating ring which encloses part of the gamma chain. F(1) is attached to F(0) by a central stalk formed by the gamma and epsilon chains, while a peripheral stalk is formed by the delta and b chains.</text>
</comment>
<comment type="subcellular location">
    <subcellularLocation>
        <location evidence="1">Cell membrane</location>
        <topology evidence="1">Single-pass membrane protein</topology>
    </subcellularLocation>
</comment>
<comment type="similarity">
    <text evidence="1">Belongs to the ATPase B chain family.</text>
</comment>
<protein>
    <recommendedName>
        <fullName evidence="1">ATP synthase subunit b</fullName>
    </recommendedName>
    <alternativeName>
        <fullName evidence="1">ATP synthase F(0) sector subunit b</fullName>
    </alternativeName>
    <alternativeName>
        <fullName evidence="1">ATPase subunit I</fullName>
    </alternativeName>
    <alternativeName>
        <fullName evidence="1">F-type ATPase subunit b</fullName>
        <shortName evidence="1">F-ATPase subunit b</shortName>
    </alternativeName>
</protein>
<evidence type="ECO:0000255" key="1">
    <source>
        <dbReference type="HAMAP-Rule" id="MF_01398"/>
    </source>
</evidence>
<sequence length="161" mass="18620">MNINATIFGQTIAFFLFVFFCMKYIWPNLISLVEKRRENIAQALNEAKQAKLNLKISKEKAKKRIESAQIKCKNIINEANETKKLLIEEAKKEAIKIKEHIISQGRLDILDEKKRMCEDLKTKISEIIVMSVEKIIESSINKKISDNIIERSISKINKIKG</sequence>
<reference key="1">
    <citation type="journal article" date="2002" name="Nat. Genet.">
        <title>Genome sequence of the endocellular obligate symbiont of tsetse flies, Wigglesworthia glossinidia.</title>
        <authorList>
            <person name="Akman L."/>
            <person name="Yamashita A."/>
            <person name="Watanabe H."/>
            <person name="Oshima K."/>
            <person name="Shiba T."/>
            <person name="Hattori M."/>
            <person name="Aksoy S."/>
        </authorList>
    </citation>
    <scope>NUCLEOTIDE SEQUENCE [LARGE SCALE GENOMIC DNA]</scope>
</reference>
<organism>
    <name type="scientific">Wigglesworthia glossinidia brevipalpis</name>
    <dbReference type="NCBI Taxonomy" id="36870"/>
    <lineage>
        <taxon>Bacteria</taxon>
        <taxon>Pseudomonadati</taxon>
        <taxon>Pseudomonadota</taxon>
        <taxon>Gammaproteobacteria</taxon>
        <taxon>Enterobacterales</taxon>
        <taxon>Erwiniaceae</taxon>
        <taxon>Wigglesworthia</taxon>
    </lineage>
</organism>
<dbReference type="EMBL" id="BA000021">
    <property type="protein sequence ID" value="BAC24150.1"/>
    <property type="molecule type" value="Genomic_DNA"/>
</dbReference>
<dbReference type="SMR" id="Q8D3J7"/>
<dbReference type="STRING" id="36870.gene:10368482"/>
<dbReference type="KEGG" id="wbr:atpF"/>
<dbReference type="eggNOG" id="COG0711">
    <property type="taxonomic scope" value="Bacteria"/>
</dbReference>
<dbReference type="HOGENOM" id="CLU_079215_4_5_6"/>
<dbReference type="OrthoDB" id="9788020at2"/>
<dbReference type="Proteomes" id="UP000000562">
    <property type="component" value="Chromosome"/>
</dbReference>
<dbReference type="GO" id="GO:0005886">
    <property type="term" value="C:plasma membrane"/>
    <property type="evidence" value="ECO:0007669"/>
    <property type="project" value="UniProtKB-SubCell"/>
</dbReference>
<dbReference type="GO" id="GO:0045259">
    <property type="term" value="C:proton-transporting ATP synthase complex"/>
    <property type="evidence" value="ECO:0007669"/>
    <property type="project" value="UniProtKB-KW"/>
</dbReference>
<dbReference type="GO" id="GO:0046933">
    <property type="term" value="F:proton-transporting ATP synthase activity, rotational mechanism"/>
    <property type="evidence" value="ECO:0007669"/>
    <property type="project" value="UniProtKB-UniRule"/>
</dbReference>
<dbReference type="GO" id="GO:0046961">
    <property type="term" value="F:proton-transporting ATPase activity, rotational mechanism"/>
    <property type="evidence" value="ECO:0007669"/>
    <property type="project" value="TreeGrafter"/>
</dbReference>
<dbReference type="CDD" id="cd06503">
    <property type="entry name" value="ATP-synt_Fo_b"/>
    <property type="match status" value="1"/>
</dbReference>
<dbReference type="Gene3D" id="1.20.5.620">
    <property type="entry name" value="F1F0 ATP synthase subunit B, membrane domain"/>
    <property type="match status" value="1"/>
</dbReference>
<dbReference type="HAMAP" id="MF_01398">
    <property type="entry name" value="ATP_synth_b_bprime"/>
    <property type="match status" value="1"/>
</dbReference>
<dbReference type="InterPro" id="IPR028987">
    <property type="entry name" value="ATP_synth_B-like_membr_sf"/>
</dbReference>
<dbReference type="InterPro" id="IPR002146">
    <property type="entry name" value="ATP_synth_b/b'su_bac/chlpt"/>
</dbReference>
<dbReference type="InterPro" id="IPR005864">
    <property type="entry name" value="ATP_synth_F0_bsu_bac"/>
</dbReference>
<dbReference type="InterPro" id="IPR050059">
    <property type="entry name" value="ATP_synthase_B_chain"/>
</dbReference>
<dbReference type="NCBIfam" id="TIGR01144">
    <property type="entry name" value="ATP_synt_b"/>
    <property type="match status" value="1"/>
</dbReference>
<dbReference type="NCBIfam" id="NF004411">
    <property type="entry name" value="PRK05759.1-2"/>
    <property type="match status" value="1"/>
</dbReference>
<dbReference type="PANTHER" id="PTHR33445:SF1">
    <property type="entry name" value="ATP SYNTHASE SUBUNIT B"/>
    <property type="match status" value="1"/>
</dbReference>
<dbReference type="PANTHER" id="PTHR33445">
    <property type="entry name" value="ATP SYNTHASE SUBUNIT B', CHLOROPLASTIC"/>
    <property type="match status" value="1"/>
</dbReference>
<dbReference type="Pfam" id="PF00430">
    <property type="entry name" value="ATP-synt_B"/>
    <property type="match status" value="1"/>
</dbReference>
<dbReference type="SUPFAM" id="SSF81573">
    <property type="entry name" value="F1F0 ATP synthase subunit B, membrane domain"/>
    <property type="match status" value="1"/>
</dbReference>
<proteinExistence type="inferred from homology"/>